<organism>
    <name type="scientific">Cricetulus griseus</name>
    <name type="common">Chinese hamster</name>
    <name type="synonym">Cricetulus barabensis griseus</name>
    <dbReference type="NCBI Taxonomy" id="10029"/>
    <lineage>
        <taxon>Eukaryota</taxon>
        <taxon>Metazoa</taxon>
        <taxon>Chordata</taxon>
        <taxon>Craniata</taxon>
        <taxon>Vertebrata</taxon>
        <taxon>Euteleostomi</taxon>
        <taxon>Mammalia</taxon>
        <taxon>Eutheria</taxon>
        <taxon>Euarchontoglires</taxon>
        <taxon>Glires</taxon>
        <taxon>Rodentia</taxon>
        <taxon>Myomorpha</taxon>
        <taxon>Muroidea</taxon>
        <taxon>Cricetidae</taxon>
        <taxon>Cricetinae</taxon>
        <taxon>Cricetulus</taxon>
    </lineage>
</organism>
<feature type="chain" id="PRO_0000328609" description="Origin recognition complex subunit 4">
    <location>
        <begin position="1"/>
        <end position="436"/>
    </location>
</feature>
<feature type="binding site" evidence="4">
    <location>
        <begin position="67"/>
        <end position="74"/>
    </location>
    <ligand>
        <name>ATP</name>
        <dbReference type="ChEBI" id="CHEBI:30616"/>
    </ligand>
</feature>
<feature type="modified residue" description="N6-methyllysine" evidence="2">
    <location>
        <position position="7"/>
    </location>
</feature>
<comment type="function">
    <text evidence="1">Component of the origin recognition complex (ORC) that binds origins of replication. DNA-binding is ATP-dependent. The specific DNA sequences that define origins of replication have not been identified yet. ORC is required to assemble the pre-replication complex necessary to initiate DNA replication. Binds histone H3 and H4 trimethylation marks H3K9me3, H3K27me3 and H4K20me3 (By similarity).</text>
</comment>
<comment type="subunit">
    <text evidence="2 3">Component of ORC, a complex composed of at least 6 subunits: ORC1, ORC2, ORC3, ORC4, ORC5 and ORC6. ORC is regulated in a cell-cycle dependent manner. It is sequentially assembled at the exit from anaphase of mitosis and disassembled as cells enter S phase (By similarity). Interacts with DBF4 (By similarity). Interacts with POLQ (By similarity).</text>
</comment>
<comment type="subcellular location">
    <subcellularLocation>
        <location evidence="1">Nucleus</location>
    </subcellularLocation>
</comment>
<comment type="similarity">
    <text evidence="5">Belongs to the ORC4 family.</text>
</comment>
<proteinExistence type="evidence at transcript level"/>
<evidence type="ECO:0000250" key="1"/>
<evidence type="ECO:0000250" key="2">
    <source>
        <dbReference type="UniProtKB" id="O43929"/>
    </source>
</evidence>
<evidence type="ECO:0000250" key="3">
    <source>
        <dbReference type="UniProtKB" id="O88708"/>
    </source>
</evidence>
<evidence type="ECO:0000255" key="4"/>
<evidence type="ECO:0000305" key="5"/>
<protein>
    <recommendedName>
        <fullName>Origin recognition complex subunit 4</fullName>
    </recommendedName>
</protein>
<sequence>MSNRKTKGNSAVHPECLSQVQRILRERFCHQSPHSNLFGVQVQYKHLIELLKRTAINGESNSVLIVGPRGSGKTMLINHALKELMEIREVSENVLQVHLNGLMQINDKIALTEITRQLNLENVVGDKVFGSFAENLSFLLEALKKGNRANSCPVIFILDEFDLFAHQKNQTLLYNLFDISQSAQTPVAVIGLTCRLDILELLEKRVKSRFSHRQIHLMNSFDFPQYMKIFKEQLSLPEEFPNKVFAERWNENTQSLSEDSTVREVLQKLFNVNKSLRSLHMLLMLALNRVTVSHPFMTSADLMEAQHLCSLDSKASIIHGLSVLEICLIIAMKHLNDIYEEEPFNFQMVYNEFQKFIQRKAHSVYNFEKPVVMKAFEHLQQLELIKPMERTSVNSQREYQLVKLLLDNTQIMNALQKYSNCPTDVRQWATSSLSWL</sequence>
<dbReference type="EMBL" id="AB183827">
    <property type="protein sequence ID" value="BAE16571.1"/>
    <property type="molecule type" value="mRNA"/>
</dbReference>
<dbReference type="EMBL" id="DQ016321">
    <property type="protein sequence ID" value="AAY41171.1"/>
    <property type="molecule type" value="mRNA"/>
</dbReference>
<dbReference type="RefSeq" id="NP_001258354.1">
    <property type="nucleotide sequence ID" value="NM_001271425.1"/>
</dbReference>
<dbReference type="RefSeq" id="XP_007646934.1">
    <property type="nucleotide sequence ID" value="XM_007648744.2"/>
</dbReference>
<dbReference type="RefSeq" id="XP_007646937.1">
    <property type="nucleotide sequence ID" value="XM_007648747.2"/>
</dbReference>
<dbReference type="SMR" id="Q4U3P8"/>
<dbReference type="PaxDb" id="10029-XP_007646935.1"/>
<dbReference type="GeneID" id="100689043"/>
<dbReference type="KEGG" id="cge:100689043"/>
<dbReference type="CTD" id="5000"/>
<dbReference type="eggNOG" id="KOG2228">
    <property type="taxonomic scope" value="Eukaryota"/>
</dbReference>
<dbReference type="OMA" id="AFTFQRN"/>
<dbReference type="OrthoDB" id="343623at2759"/>
<dbReference type="Proteomes" id="UP000694386">
    <property type="component" value="Unplaced"/>
</dbReference>
<dbReference type="Proteomes" id="UP001108280">
    <property type="component" value="Chromosome 6"/>
</dbReference>
<dbReference type="GO" id="GO:0005664">
    <property type="term" value="C:nuclear origin of replication recognition complex"/>
    <property type="evidence" value="ECO:0000250"/>
    <property type="project" value="UniProtKB"/>
</dbReference>
<dbReference type="GO" id="GO:0005634">
    <property type="term" value="C:nucleus"/>
    <property type="evidence" value="ECO:0000250"/>
    <property type="project" value="UniProtKB"/>
</dbReference>
<dbReference type="GO" id="GO:0005524">
    <property type="term" value="F:ATP binding"/>
    <property type="evidence" value="ECO:0007669"/>
    <property type="project" value="UniProtKB-KW"/>
</dbReference>
<dbReference type="GO" id="GO:0016887">
    <property type="term" value="F:ATP hydrolysis activity"/>
    <property type="evidence" value="ECO:0007669"/>
    <property type="project" value="InterPro"/>
</dbReference>
<dbReference type="GO" id="GO:0003688">
    <property type="term" value="F:DNA replication origin binding"/>
    <property type="evidence" value="ECO:0000250"/>
    <property type="project" value="UniProtKB"/>
</dbReference>
<dbReference type="GO" id="GO:0000166">
    <property type="term" value="F:nucleotide binding"/>
    <property type="evidence" value="ECO:0000250"/>
    <property type="project" value="UniProtKB"/>
</dbReference>
<dbReference type="GO" id="GO:0006270">
    <property type="term" value="P:DNA replication initiation"/>
    <property type="evidence" value="ECO:0000250"/>
    <property type="project" value="UniProtKB"/>
</dbReference>
<dbReference type="CDD" id="cd00009">
    <property type="entry name" value="AAA"/>
    <property type="match status" value="1"/>
</dbReference>
<dbReference type="FunFam" id="3.40.50.300:FF:000649">
    <property type="entry name" value="Origin recognition complex subunit 4"/>
    <property type="match status" value="1"/>
</dbReference>
<dbReference type="Gene3D" id="3.40.50.300">
    <property type="entry name" value="P-loop containing nucleotide triphosphate hydrolases"/>
    <property type="match status" value="1"/>
</dbReference>
<dbReference type="InterPro" id="IPR003593">
    <property type="entry name" value="AAA+_ATPase"/>
</dbReference>
<dbReference type="InterPro" id="IPR003959">
    <property type="entry name" value="ATPase_AAA_core"/>
</dbReference>
<dbReference type="InterPro" id="IPR016527">
    <property type="entry name" value="ORC4"/>
</dbReference>
<dbReference type="InterPro" id="IPR032705">
    <property type="entry name" value="ORC4_C"/>
</dbReference>
<dbReference type="InterPro" id="IPR027417">
    <property type="entry name" value="P-loop_NTPase"/>
</dbReference>
<dbReference type="PANTHER" id="PTHR12087">
    <property type="entry name" value="ORIGIN RECOGNITION COMPLEX SUBUNIT 4"/>
    <property type="match status" value="1"/>
</dbReference>
<dbReference type="PANTHER" id="PTHR12087:SF0">
    <property type="entry name" value="ORIGIN RECOGNITION COMPLEX SUBUNIT 4"/>
    <property type="match status" value="1"/>
</dbReference>
<dbReference type="Pfam" id="PF00004">
    <property type="entry name" value="AAA"/>
    <property type="match status" value="1"/>
</dbReference>
<dbReference type="Pfam" id="PF14629">
    <property type="entry name" value="ORC4_C"/>
    <property type="match status" value="1"/>
</dbReference>
<dbReference type="PIRSF" id="PIRSF007858">
    <property type="entry name" value="ORC4"/>
    <property type="match status" value="1"/>
</dbReference>
<dbReference type="SMART" id="SM00382">
    <property type="entry name" value="AAA"/>
    <property type="match status" value="1"/>
</dbReference>
<dbReference type="SUPFAM" id="SSF52540">
    <property type="entry name" value="P-loop containing nucleoside triphosphate hydrolases"/>
    <property type="match status" value="1"/>
</dbReference>
<name>ORC4_CRIGR</name>
<accession>Q4U3P8</accession>
<reference key="1">
    <citation type="journal article" date="2005" name="Exp. Cell Res.">
        <title>Chinese hamster ORC subunits dynamically associate with chromatin throughout the cell-cycle.</title>
        <authorList>
            <person name="McNairn A.J."/>
            <person name="Okuno Y."/>
            <person name="Misteli T."/>
            <person name="Gilbert D.M."/>
        </authorList>
    </citation>
    <scope>NUCLEOTIDE SEQUENCE [MRNA]</scope>
</reference>
<reference key="2">
    <citation type="submission" date="2005-04" db="EMBL/GenBank/DDBJ databases">
        <title>Cloning and analysis of the Chinese hamster Orc4 and Orc5 subunits reveals distinct forms of regulation.</title>
        <authorList>
            <person name="Alexandrow M.G."/>
            <person name="Cao T.V."/>
            <person name="Zaika E."/>
            <person name="Hamlin J.L."/>
        </authorList>
    </citation>
    <scope>NUCLEOTIDE SEQUENCE [MRNA]</scope>
</reference>
<gene>
    <name type="primary">ORC4</name>
    <name type="synonym">ORC4L</name>
</gene>
<keyword id="KW-0067">ATP-binding</keyword>
<keyword id="KW-0235">DNA replication</keyword>
<keyword id="KW-0238">DNA-binding</keyword>
<keyword id="KW-0488">Methylation</keyword>
<keyword id="KW-0547">Nucleotide-binding</keyword>
<keyword id="KW-0539">Nucleus</keyword>